<gene>
    <name type="ordered locus">Tlet_1100</name>
</gene>
<proteinExistence type="inferred from homology"/>
<evidence type="ECO:0000255" key="1">
    <source>
        <dbReference type="HAMAP-Rule" id="MF_00457"/>
    </source>
</evidence>
<feature type="chain" id="PRO_1000060325" description="UPF0173 metal-dependent hydrolase Tlet_1100">
    <location>
        <begin position="1"/>
        <end position="227"/>
    </location>
</feature>
<comment type="similarity">
    <text evidence="1">Belongs to the UPF0173 family.</text>
</comment>
<accession>A8F681</accession>
<sequence length="227" mass="25206">MKALYLGHAAVLLQTGERNILIDPFINENPSCPIKVQDLPKIHYILVTHGHGDHLGDTVEIAKRDSSTVITNFELSSLISRHGISTHPMHIGGRYTFEFGSVKLTPALHGSSISEGDTPVYAGNPCGFLIEIHDKKIYHAGDTGLTKDMELLRRENIDLAFLPIGGNFVMDLWDAVEAVKMIYPEIVVPIHYNTWEVIKSDPAIFQKEVEKLGLKCRALKPGESIEL</sequence>
<dbReference type="EMBL" id="CP000812">
    <property type="protein sequence ID" value="ABV33665.1"/>
    <property type="molecule type" value="Genomic_DNA"/>
</dbReference>
<dbReference type="RefSeq" id="WP_012003146.1">
    <property type="nucleotide sequence ID" value="NZ_BSDV01000001.1"/>
</dbReference>
<dbReference type="SMR" id="A8F681"/>
<dbReference type="STRING" id="416591.Tlet_1100"/>
<dbReference type="KEGG" id="tle:Tlet_1100"/>
<dbReference type="eggNOG" id="COG2220">
    <property type="taxonomic scope" value="Bacteria"/>
</dbReference>
<dbReference type="HOGENOM" id="CLU_070010_4_1_0"/>
<dbReference type="OrthoDB" id="36975at2"/>
<dbReference type="Proteomes" id="UP000002016">
    <property type="component" value="Chromosome"/>
</dbReference>
<dbReference type="GO" id="GO:0016787">
    <property type="term" value="F:hydrolase activity"/>
    <property type="evidence" value="ECO:0007669"/>
    <property type="project" value="UniProtKB-UniRule"/>
</dbReference>
<dbReference type="Gene3D" id="3.60.15.10">
    <property type="entry name" value="Ribonuclease Z/Hydroxyacylglutathione hydrolase-like"/>
    <property type="match status" value="1"/>
</dbReference>
<dbReference type="HAMAP" id="MF_00457">
    <property type="entry name" value="UPF0173"/>
    <property type="match status" value="1"/>
</dbReference>
<dbReference type="InterPro" id="IPR001279">
    <property type="entry name" value="Metallo-B-lactamas"/>
</dbReference>
<dbReference type="InterPro" id="IPR036866">
    <property type="entry name" value="RibonucZ/Hydroxyglut_hydro"/>
</dbReference>
<dbReference type="InterPro" id="IPR022877">
    <property type="entry name" value="UPF0173"/>
</dbReference>
<dbReference type="InterPro" id="IPR050114">
    <property type="entry name" value="UPF0173_UPF0282_UlaG_hydrolase"/>
</dbReference>
<dbReference type="NCBIfam" id="NF001911">
    <property type="entry name" value="PRK00685.1"/>
    <property type="match status" value="1"/>
</dbReference>
<dbReference type="PANTHER" id="PTHR43546:SF3">
    <property type="entry name" value="UPF0173 METAL-DEPENDENT HYDROLASE MJ1163"/>
    <property type="match status" value="1"/>
</dbReference>
<dbReference type="PANTHER" id="PTHR43546">
    <property type="entry name" value="UPF0173 METAL-DEPENDENT HYDROLASE MJ1163-RELATED"/>
    <property type="match status" value="1"/>
</dbReference>
<dbReference type="Pfam" id="PF12706">
    <property type="entry name" value="Lactamase_B_2"/>
    <property type="match status" value="1"/>
</dbReference>
<dbReference type="SMART" id="SM00849">
    <property type="entry name" value="Lactamase_B"/>
    <property type="match status" value="1"/>
</dbReference>
<dbReference type="SUPFAM" id="SSF56281">
    <property type="entry name" value="Metallo-hydrolase/oxidoreductase"/>
    <property type="match status" value="1"/>
</dbReference>
<keyword id="KW-0378">Hydrolase</keyword>
<keyword id="KW-1185">Reference proteome</keyword>
<protein>
    <recommendedName>
        <fullName evidence="1">UPF0173 metal-dependent hydrolase Tlet_1100</fullName>
    </recommendedName>
</protein>
<organism>
    <name type="scientific">Pseudothermotoga lettingae (strain ATCC BAA-301 / DSM 14385 / NBRC 107922 / TMO)</name>
    <name type="common">Thermotoga lettingae</name>
    <dbReference type="NCBI Taxonomy" id="416591"/>
    <lineage>
        <taxon>Bacteria</taxon>
        <taxon>Thermotogati</taxon>
        <taxon>Thermotogota</taxon>
        <taxon>Thermotogae</taxon>
        <taxon>Thermotogales</taxon>
        <taxon>Thermotogaceae</taxon>
        <taxon>Pseudothermotoga</taxon>
    </lineage>
</organism>
<name>Y1100_PSELT</name>
<reference key="1">
    <citation type="submission" date="2007-08" db="EMBL/GenBank/DDBJ databases">
        <title>Complete sequence of Thermotoga lettingae TMO.</title>
        <authorList>
            <consortium name="US DOE Joint Genome Institute"/>
            <person name="Copeland A."/>
            <person name="Lucas S."/>
            <person name="Lapidus A."/>
            <person name="Barry K."/>
            <person name="Glavina del Rio T."/>
            <person name="Dalin E."/>
            <person name="Tice H."/>
            <person name="Pitluck S."/>
            <person name="Foster B."/>
            <person name="Bruce D."/>
            <person name="Schmutz J."/>
            <person name="Larimer F."/>
            <person name="Land M."/>
            <person name="Hauser L."/>
            <person name="Kyrpides N."/>
            <person name="Mikhailova N."/>
            <person name="Nelson K."/>
            <person name="Gogarten J.P."/>
            <person name="Noll K."/>
            <person name="Richardson P."/>
        </authorList>
    </citation>
    <scope>NUCLEOTIDE SEQUENCE [LARGE SCALE GENOMIC DNA]</scope>
    <source>
        <strain>ATCC BAA-301 / DSM 14385 / NBRC 107922 / TMO</strain>
    </source>
</reference>